<gene>
    <name evidence="1" type="primary">thrB</name>
    <name type="ordered locus">Mvan_4346</name>
</gene>
<comment type="function">
    <text evidence="1">Catalyzes the ATP-dependent phosphorylation of L-homoserine to L-homoserine phosphate.</text>
</comment>
<comment type="catalytic activity">
    <reaction evidence="1">
        <text>L-homoserine + ATP = O-phospho-L-homoserine + ADP + H(+)</text>
        <dbReference type="Rhea" id="RHEA:13985"/>
        <dbReference type="ChEBI" id="CHEBI:15378"/>
        <dbReference type="ChEBI" id="CHEBI:30616"/>
        <dbReference type="ChEBI" id="CHEBI:57476"/>
        <dbReference type="ChEBI" id="CHEBI:57590"/>
        <dbReference type="ChEBI" id="CHEBI:456216"/>
        <dbReference type="EC" id="2.7.1.39"/>
    </reaction>
</comment>
<comment type="pathway">
    <text evidence="1">Amino-acid biosynthesis; L-threonine biosynthesis; L-threonine from L-aspartate: step 4/5.</text>
</comment>
<comment type="subcellular location">
    <subcellularLocation>
        <location evidence="1">Cytoplasm</location>
    </subcellularLocation>
</comment>
<comment type="similarity">
    <text evidence="1">Belongs to the GHMP kinase family. Homoserine kinase subfamily.</text>
</comment>
<evidence type="ECO:0000255" key="1">
    <source>
        <dbReference type="HAMAP-Rule" id="MF_00384"/>
    </source>
</evidence>
<protein>
    <recommendedName>
        <fullName evidence="1">Homoserine kinase</fullName>
        <shortName evidence="1">HK</shortName>
        <shortName evidence="1">HSK</shortName>
        <ecNumber evidence="1">2.7.1.39</ecNumber>
    </recommendedName>
</protein>
<sequence>MTRTLPPGLTATAVVAASSANLGPGFDSMGLAIGLYDEIVVETTESGLVVEVEGEGSGQVPLDGSHLVVRAIERGLRETGVSAPGLIVRCRNDIPHSRGLGSSAAAVVGGLAAANGLAAQTDSTLMSPERLVQVSSEFEGHPDNAAAAVLGGAVVAWTAAGAGDPRYAAAPIRLHPDIAIFAAVPQVRSSTAETRVLLPEHVRHTDARFNLSRAALLVVALTERPDLLMEATEDVLHQPQRAAAMPASAEYLAMLRRCGVPAVLSGAGPAVLALSTETELPAEALRYGADHGFAVKRMSVGHGVSWTSGVAVRT</sequence>
<feature type="chain" id="PRO_1000049152" description="Homoserine kinase">
    <location>
        <begin position="1"/>
        <end position="314"/>
    </location>
</feature>
<feature type="binding site" evidence="1">
    <location>
        <begin position="95"/>
        <end position="105"/>
    </location>
    <ligand>
        <name>ATP</name>
        <dbReference type="ChEBI" id="CHEBI:30616"/>
    </ligand>
</feature>
<proteinExistence type="inferred from homology"/>
<name>KHSE_MYCVP</name>
<organism>
    <name type="scientific">Mycolicibacterium vanbaalenii (strain DSM 7251 / JCM 13017 / BCRC 16820 / KCTC 9966 / NRRL B-24157 / PYR-1)</name>
    <name type="common">Mycobacterium vanbaalenii</name>
    <dbReference type="NCBI Taxonomy" id="350058"/>
    <lineage>
        <taxon>Bacteria</taxon>
        <taxon>Bacillati</taxon>
        <taxon>Actinomycetota</taxon>
        <taxon>Actinomycetes</taxon>
        <taxon>Mycobacteriales</taxon>
        <taxon>Mycobacteriaceae</taxon>
        <taxon>Mycolicibacterium</taxon>
    </lineage>
</organism>
<accession>A1TD73</accession>
<dbReference type="EC" id="2.7.1.39" evidence="1"/>
<dbReference type="EMBL" id="CP000511">
    <property type="protein sequence ID" value="ABM15123.1"/>
    <property type="molecule type" value="Genomic_DNA"/>
</dbReference>
<dbReference type="RefSeq" id="WP_011781501.1">
    <property type="nucleotide sequence ID" value="NC_008726.1"/>
</dbReference>
<dbReference type="SMR" id="A1TD73"/>
<dbReference type="STRING" id="350058.Mvan_4346"/>
<dbReference type="KEGG" id="mva:Mvan_4346"/>
<dbReference type="eggNOG" id="COG0083">
    <property type="taxonomic scope" value="Bacteria"/>
</dbReference>
<dbReference type="HOGENOM" id="CLU_041243_0_1_11"/>
<dbReference type="UniPathway" id="UPA00050">
    <property type="reaction ID" value="UER00064"/>
</dbReference>
<dbReference type="Proteomes" id="UP000009159">
    <property type="component" value="Chromosome"/>
</dbReference>
<dbReference type="GO" id="GO:0005737">
    <property type="term" value="C:cytoplasm"/>
    <property type="evidence" value="ECO:0007669"/>
    <property type="project" value="UniProtKB-SubCell"/>
</dbReference>
<dbReference type="GO" id="GO:0005524">
    <property type="term" value="F:ATP binding"/>
    <property type="evidence" value="ECO:0007669"/>
    <property type="project" value="UniProtKB-UniRule"/>
</dbReference>
<dbReference type="GO" id="GO:0004413">
    <property type="term" value="F:homoserine kinase activity"/>
    <property type="evidence" value="ECO:0007669"/>
    <property type="project" value="UniProtKB-UniRule"/>
</dbReference>
<dbReference type="GO" id="GO:0009088">
    <property type="term" value="P:threonine biosynthetic process"/>
    <property type="evidence" value="ECO:0007669"/>
    <property type="project" value="UniProtKB-UniRule"/>
</dbReference>
<dbReference type="Gene3D" id="3.30.230.10">
    <property type="match status" value="1"/>
</dbReference>
<dbReference type="Gene3D" id="3.30.70.890">
    <property type="entry name" value="GHMP kinase, C-terminal domain"/>
    <property type="match status" value="1"/>
</dbReference>
<dbReference type="HAMAP" id="MF_00384">
    <property type="entry name" value="Homoser_kinase"/>
    <property type="match status" value="1"/>
</dbReference>
<dbReference type="InterPro" id="IPR013750">
    <property type="entry name" value="GHMP_kinase_C_dom"/>
</dbReference>
<dbReference type="InterPro" id="IPR036554">
    <property type="entry name" value="GHMP_kinase_C_sf"/>
</dbReference>
<dbReference type="InterPro" id="IPR006204">
    <property type="entry name" value="GHMP_kinase_N_dom"/>
</dbReference>
<dbReference type="InterPro" id="IPR006203">
    <property type="entry name" value="GHMP_knse_ATP-bd_CS"/>
</dbReference>
<dbReference type="InterPro" id="IPR000870">
    <property type="entry name" value="Homoserine_kinase"/>
</dbReference>
<dbReference type="InterPro" id="IPR020568">
    <property type="entry name" value="Ribosomal_Su5_D2-typ_SF"/>
</dbReference>
<dbReference type="InterPro" id="IPR014721">
    <property type="entry name" value="Ribsml_uS5_D2-typ_fold_subgr"/>
</dbReference>
<dbReference type="NCBIfam" id="TIGR00191">
    <property type="entry name" value="thrB"/>
    <property type="match status" value="1"/>
</dbReference>
<dbReference type="PANTHER" id="PTHR20861:SF1">
    <property type="entry name" value="HOMOSERINE KINASE"/>
    <property type="match status" value="1"/>
</dbReference>
<dbReference type="PANTHER" id="PTHR20861">
    <property type="entry name" value="HOMOSERINE/4-DIPHOSPHOCYTIDYL-2-C-METHYL-D-ERYTHRITOL KINASE"/>
    <property type="match status" value="1"/>
</dbReference>
<dbReference type="Pfam" id="PF08544">
    <property type="entry name" value="GHMP_kinases_C"/>
    <property type="match status" value="1"/>
</dbReference>
<dbReference type="Pfam" id="PF00288">
    <property type="entry name" value="GHMP_kinases_N"/>
    <property type="match status" value="1"/>
</dbReference>
<dbReference type="PIRSF" id="PIRSF000676">
    <property type="entry name" value="Homoser_kin"/>
    <property type="match status" value="1"/>
</dbReference>
<dbReference type="PRINTS" id="PR00958">
    <property type="entry name" value="HOMSERKINASE"/>
</dbReference>
<dbReference type="SUPFAM" id="SSF55060">
    <property type="entry name" value="GHMP Kinase, C-terminal domain"/>
    <property type="match status" value="1"/>
</dbReference>
<dbReference type="SUPFAM" id="SSF54211">
    <property type="entry name" value="Ribosomal protein S5 domain 2-like"/>
    <property type="match status" value="1"/>
</dbReference>
<dbReference type="PROSITE" id="PS00627">
    <property type="entry name" value="GHMP_KINASES_ATP"/>
    <property type="match status" value="1"/>
</dbReference>
<keyword id="KW-0028">Amino-acid biosynthesis</keyword>
<keyword id="KW-0067">ATP-binding</keyword>
<keyword id="KW-0963">Cytoplasm</keyword>
<keyword id="KW-0418">Kinase</keyword>
<keyword id="KW-0547">Nucleotide-binding</keyword>
<keyword id="KW-0791">Threonine biosynthesis</keyword>
<keyword id="KW-0808">Transferase</keyword>
<reference key="1">
    <citation type="submission" date="2006-12" db="EMBL/GenBank/DDBJ databases">
        <title>Complete sequence of Mycobacterium vanbaalenii PYR-1.</title>
        <authorList>
            <consortium name="US DOE Joint Genome Institute"/>
            <person name="Copeland A."/>
            <person name="Lucas S."/>
            <person name="Lapidus A."/>
            <person name="Barry K."/>
            <person name="Detter J.C."/>
            <person name="Glavina del Rio T."/>
            <person name="Hammon N."/>
            <person name="Israni S."/>
            <person name="Dalin E."/>
            <person name="Tice H."/>
            <person name="Pitluck S."/>
            <person name="Singan V."/>
            <person name="Schmutz J."/>
            <person name="Larimer F."/>
            <person name="Land M."/>
            <person name="Hauser L."/>
            <person name="Kyrpides N."/>
            <person name="Anderson I.J."/>
            <person name="Miller C."/>
            <person name="Richardson P."/>
        </authorList>
    </citation>
    <scope>NUCLEOTIDE SEQUENCE [LARGE SCALE GENOMIC DNA]</scope>
    <source>
        <strain>DSM 7251 / JCM 13017 / BCRC 16820 / KCTC 9966 / NRRL B-24157 / PYR-1</strain>
    </source>
</reference>